<reference key="1">
    <citation type="journal article" date="1997" name="Gene">
        <title>Molecular cloning and expression of a porcine chondrocyte nucleotide pyrophosphohydrolase.</title>
        <authorList>
            <person name="Masuda I."/>
            <person name="Halligan B.D."/>
            <person name="Barbieri J.T."/>
            <person name="Haas A.L."/>
            <person name="Ryan L.M."/>
            <person name="McCarty D.J."/>
        </authorList>
    </citation>
    <scope>NUCLEOTIDE SEQUENCE [MRNA]</scope>
</reference>
<reference key="2">
    <citation type="journal article" date="1995" name="J. Clin. Invest.">
        <title>A unique ectonucleotide pyrophosphohydrolase associated with porcine chondrocyte-derived vesicles.</title>
        <authorList>
            <person name="Masuda I."/>
            <person name="Hamada J."/>
            <person name="Haas A.L."/>
            <person name="Ryan L.M."/>
            <person name="McCarty D.J."/>
        </authorList>
    </citation>
    <scope>PROTEIN SEQUENCE OF 141-167</scope>
</reference>
<reference key="3">
    <citation type="journal article" date="1995" name="J. Clin. Invest.">
        <authorList>
            <person name="Masuda I."/>
            <person name="Hamada J."/>
            <person name="Haas A.L."/>
            <person name="Ryan L.M."/>
            <person name="McCarty D.J."/>
        </authorList>
    </citation>
    <scope>ERRATUM OF PUBMED:7860751</scope>
</reference>
<reference key="4">
    <citation type="journal article" date="2000" name="Arthritis Rheum.">
        <title>Expression of cartilage intermediate layer protein/nucleotide pyrophosphohydrolase parallels the production of extracellular inorganic pyrophosphate in response to growth factors and with aging.</title>
        <authorList>
            <person name="Hirose J."/>
            <person name="Masuda I."/>
            <person name="Ryan L.M."/>
        </authorList>
    </citation>
    <scope>INDUCTION</scope>
</reference>
<reference key="5">
    <citation type="journal article" date="2001" name="J. Bone Miner. Res.">
        <title>Variations in site and levels of expression of chondrocyte nucleotide pyrophosphohydrolase with aging.</title>
        <authorList>
            <person name="Masuda I."/>
            <person name="Iyama K."/>
            <person name="Halligan B.D."/>
            <person name="Barbieri J.T."/>
            <person name="Haas A.L."/>
            <person name="McCarty D.J."/>
            <person name="Ryan L.M."/>
        </authorList>
    </citation>
    <scope>DEVELOPMENTAL STAGE</scope>
</reference>
<comment type="function">
    <text evidence="1">Probably plays a role in cartilage scaffolding. May act by antagonizing TGF-beta1 (TGFB1) and IGF1 functions. Has the ability to suppress IGF1-induced proliferation and sulfated proteoglycan synthesis, and inhibits ligand-induced IGF1R autophosphorylation. May inhibit TGFB1-mediated induction of cartilage matrix genes via its interaction with TGFB1. Overexpression may lead to impair chondrocyte growth and matrix repair and indirectly promote inorganic pyrophosphate (PPi) supersaturation in aging and osteoarthritis cartilage (By similarity).</text>
</comment>
<comment type="subunit">
    <text evidence="1">Monomer. Interacts with TGFB1 (By similarity).</text>
</comment>
<comment type="subcellular location">
    <subcellularLocation>
        <location evidence="1">Secreted</location>
        <location evidence="1">Extracellular space</location>
        <location evidence="1">Extracellular matrix</location>
    </subcellularLocation>
</comment>
<comment type="tissue specificity">
    <text>Specifically expressed in cartilage. Expressed at lower level in young cartilage than in adult cartilage. In adult cartilage, it is highly expressed throughout middeep zones.</text>
</comment>
<comment type="induction">
    <text evidence="4">Up-regulated upon TGFB1 treatment, and down-regulated by IGF1.</text>
</comment>
<comment type="PTM">
    <text evidence="1">Cleaved into 2 chains possibly by a furin-like protease upon or preceding secretion.</text>
</comment>
<comment type="caution">
    <text evidence="5">Was originally (PubMed:9332376, PubMed:7860751) thought to constitute the ATP pyrophosphatase enzyme (NTPPH). However, it was later shown that it is probably not the case.</text>
</comment>
<sequence>QHYPLGDMDGEDPMGELEIPSKSFYRQNGEPYTGKVKASVTFLDPRNISTATAAQSDLNFINDEGDTFPLRTYGMFSVDFTDEAASESLNVGKVKVHLDSTQVKMPEHVPMMKLWSLNPDTGLWEEEGDFRFESQRRKRREDRTFLVGNMEIRERRLFNLDVPESRRCFIKVRAYRSERFLPSEQIQGVVVSVINLEPRAGFSSNPRAWGRFDSVLTGPNGACLPAFCDDQSPDAYSAYVLASLAGEELEAVESSPKFNPNAIGVPQPYLNKLKYRRTDHEDPRVKKTAFQISMAKPRPNSAEESNGPIYAFENLQACEEAPPSAAHFRFYQIEGDRYDYNTVPFNEDDPMSWTEDYLAWWPKPMEFRACYIKVKIVGPLEVNVRSRNMGGTHRQTVGKLYGIRDVKSTRDRDQPNVSSACLEFKCSGMLYDQDRVDRTLVKVIPQGSCHRASVNSMLHEYLVNHLPLAVNNDTSEYTMLAPLDPLGHNYGIYTVTDQDPRTAKEIALGRCFDGSSDGSSRVMKSNVGVALTFNCVERQVGRQSAFQYLQSTSARPSPASTVRGRAPSRRQRASSGSQRQPRGVASLRFPGVAQQPLSN</sequence>
<proteinExistence type="evidence at protein level"/>
<gene>
    <name type="primary">CILP</name>
    <name type="synonym">NTPPH</name>
</gene>
<name>CILP1_PIG</name>
<protein>
    <recommendedName>
        <fullName>Cartilage intermediate layer protein 1</fullName>
        <shortName>CILP-1</shortName>
    </recommendedName>
    <component>
        <recommendedName>
            <fullName>Cartilage intermediate layer protein 1 C2</fullName>
        </recommendedName>
    </component>
</protein>
<organism>
    <name type="scientific">Sus scrofa</name>
    <name type="common">Pig</name>
    <dbReference type="NCBI Taxonomy" id="9823"/>
    <lineage>
        <taxon>Eukaryota</taxon>
        <taxon>Metazoa</taxon>
        <taxon>Chordata</taxon>
        <taxon>Craniata</taxon>
        <taxon>Vertebrata</taxon>
        <taxon>Euteleostomi</taxon>
        <taxon>Mammalia</taxon>
        <taxon>Eutheria</taxon>
        <taxon>Laurasiatheria</taxon>
        <taxon>Artiodactyla</taxon>
        <taxon>Suina</taxon>
        <taxon>Suidae</taxon>
        <taxon>Sus</taxon>
    </lineage>
</organism>
<accession>O19112</accession>
<accession>Q9TS02</accession>
<keyword id="KW-0903">Direct protein sequencing</keyword>
<keyword id="KW-0272">Extracellular matrix</keyword>
<keyword id="KW-0325">Glycoprotein</keyword>
<keyword id="KW-1185">Reference proteome</keyword>
<keyword id="KW-0964">Secreted</keyword>
<dbReference type="EMBL" id="U83114">
    <property type="protein sequence ID" value="AAC48770.1"/>
    <property type="molecule type" value="mRNA"/>
</dbReference>
<dbReference type="STRING" id="9823.ENSSSCP00000059189"/>
<dbReference type="GlyCosmos" id="O19112">
    <property type="glycosylation" value="3 sites, No reported glycans"/>
</dbReference>
<dbReference type="GlyGen" id="O19112">
    <property type="glycosylation" value="3 sites"/>
</dbReference>
<dbReference type="PaxDb" id="9823-ENSSSCP00000005303"/>
<dbReference type="PeptideAtlas" id="O19112"/>
<dbReference type="eggNOG" id="ENOG502QQ8H">
    <property type="taxonomic scope" value="Eukaryota"/>
</dbReference>
<dbReference type="InParanoid" id="O19112"/>
<dbReference type="Proteomes" id="UP000008227">
    <property type="component" value="Unplaced"/>
</dbReference>
<dbReference type="Proteomes" id="UP000314985">
    <property type="component" value="Unplaced"/>
</dbReference>
<dbReference type="Proteomes" id="UP000694570">
    <property type="component" value="Unplaced"/>
</dbReference>
<dbReference type="Proteomes" id="UP000694571">
    <property type="component" value="Unplaced"/>
</dbReference>
<dbReference type="Proteomes" id="UP000694720">
    <property type="component" value="Unplaced"/>
</dbReference>
<dbReference type="Proteomes" id="UP000694722">
    <property type="component" value="Unplaced"/>
</dbReference>
<dbReference type="Proteomes" id="UP000694723">
    <property type="component" value="Unplaced"/>
</dbReference>
<dbReference type="Proteomes" id="UP000694724">
    <property type="component" value="Unplaced"/>
</dbReference>
<dbReference type="Proteomes" id="UP000694725">
    <property type="component" value="Unplaced"/>
</dbReference>
<dbReference type="Proteomes" id="UP000694726">
    <property type="component" value="Unplaced"/>
</dbReference>
<dbReference type="Proteomes" id="UP000694727">
    <property type="component" value="Unplaced"/>
</dbReference>
<dbReference type="Proteomes" id="UP000694728">
    <property type="component" value="Unplaced"/>
</dbReference>
<dbReference type="GO" id="GO:0005576">
    <property type="term" value="C:extracellular region"/>
    <property type="evidence" value="ECO:0007669"/>
    <property type="project" value="UniProtKB-KW"/>
</dbReference>
<dbReference type="InterPro" id="IPR056257">
    <property type="entry name" value="CILP-1/2_8th"/>
</dbReference>
<dbReference type="InterPro" id="IPR056258">
    <property type="entry name" value="CILP-1/2_C"/>
</dbReference>
<dbReference type="InterPro" id="IPR039675">
    <property type="entry name" value="CILP1/CILP2"/>
</dbReference>
<dbReference type="PANTHER" id="PTHR15031:SF3">
    <property type="entry name" value="CARTILAGE INTERMEDIATE LAYER PROTEIN 1"/>
    <property type="match status" value="1"/>
</dbReference>
<dbReference type="PANTHER" id="PTHR15031">
    <property type="entry name" value="CARTILAGE INTERMEDIATE LAYER PROTEIN CLIP"/>
    <property type="match status" value="1"/>
</dbReference>
<dbReference type="Pfam" id="PF23730">
    <property type="entry name" value="CILP_8th"/>
    <property type="match status" value="1"/>
</dbReference>
<dbReference type="Pfam" id="PF23599">
    <property type="entry name" value="CILP_C"/>
    <property type="match status" value="1"/>
</dbReference>
<evidence type="ECO:0000250" key="1"/>
<evidence type="ECO:0000255" key="2"/>
<evidence type="ECO:0000256" key="3">
    <source>
        <dbReference type="SAM" id="MobiDB-lite"/>
    </source>
</evidence>
<evidence type="ECO:0000269" key="4">
    <source>
    </source>
</evidence>
<evidence type="ECO:0000305" key="5"/>
<feature type="chain" id="PRO_0000014677" description="Cartilage intermediate layer protein 1 C2">
    <location>
        <begin position="1" status="less than"/>
        <end position="599"/>
    </location>
</feature>
<feature type="region of interest" description="Disordered" evidence="3">
    <location>
        <begin position="550"/>
        <end position="599"/>
    </location>
</feature>
<feature type="compositionally biased region" description="Polar residues" evidence="3">
    <location>
        <begin position="550"/>
        <end position="560"/>
    </location>
</feature>
<feature type="compositionally biased region" description="Low complexity" evidence="3">
    <location>
        <begin position="573"/>
        <end position="583"/>
    </location>
</feature>
<feature type="glycosylation site" description="N-linked (GlcNAc...) asparagine" evidence="2">
    <location>
        <position position="47"/>
    </location>
</feature>
<feature type="glycosylation site" description="N-linked (GlcNAc...) asparagine" evidence="2">
    <location>
        <position position="416"/>
    </location>
</feature>
<feature type="glycosylation site" description="N-linked (GlcNAc...) asparagine" evidence="2">
    <location>
        <position position="472"/>
    </location>
</feature>
<feature type="sequence conflict" description="In Ref. 2; AA sequence." evidence="5" ref="2">
    <original>ER</original>
    <variation>RT</variation>
    <location>
        <begin position="154"/>
        <end position="155"/>
    </location>
</feature>
<feature type="sequence conflict" description="In Ref. 2; AA sequence." evidence="5" ref="2">
    <original>ES</original>
    <variation>AT</variation>
    <location>
        <begin position="164"/>
        <end position="165"/>
    </location>
</feature>
<feature type="non-terminal residue">
    <location>
        <position position="1"/>
    </location>
</feature>